<comment type="function">
    <text evidence="1">Nucleoside triphosphate pyrophosphatase that hydrolyzes 7-methyl-GTP (m(7)GTP). May have a dual role in cell division arrest and in preventing the incorporation of modified nucleotides into cellular nucleic acids.</text>
</comment>
<comment type="catalytic activity">
    <reaction evidence="1">
        <text>N(7)-methyl-GTP + H2O = N(7)-methyl-GMP + diphosphate + H(+)</text>
        <dbReference type="Rhea" id="RHEA:58744"/>
        <dbReference type="ChEBI" id="CHEBI:15377"/>
        <dbReference type="ChEBI" id="CHEBI:15378"/>
        <dbReference type="ChEBI" id="CHEBI:33019"/>
        <dbReference type="ChEBI" id="CHEBI:58285"/>
        <dbReference type="ChEBI" id="CHEBI:87133"/>
    </reaction>
</comment>
<comment type="cofactor">
    <cofactor evidence="1">
        <name>a divalent metal cation</name>
        <dbReference type="ChEBI" id="CHEBI:60240"/>
    </cofactor>
</comment>
<comment type="subcellular location">
    <subcellularLocation>
        <location evidence="1 2">Cytoplasm</location>
    </subcellularLocation>
</comment>
<comment type="similarity">
    <text evidence="1">Belongs to the Maf family. YceF subfamily.</text>
</comment>
<comment type="sequence caution" evidence="2">
    <conflict type="erroneous initiation">
        <sequence resource="EMBL-CDS" id="AAG55833"/>
    </conflict>
</comment>
<comment type="sequence caution" evidence="2">
    <conflict type="erroneous initiation">
        <sequence resource="EMBL-CDS" id="BAB34888"/>
    </conflict>
</comment>
<reference key="1">
    <citation type="journal article" date="2001" name="Nature">
        <title>Genome sequence of enterohaemorrhagic Escherichia coli O157:H7.</title>
        <authorList>
            <person name="Perna N.T."/>
            <person name="Plunkett G. III"/>
            <person name="Burland V."/>
            <person name="Mau B."/>
            <person name="Glasner J.D."/>
            <person name="Rose D.J."/>
            <person name="Mayhew G.F."/>
            <person name="Evans P.S."/>
            <person name="Gregor J."/>
            <person name="Kirkpatrick H.A."/>
            <person name="Posfai G."/>
            <person name="Hackett J."/>
            <person name="Klink S."/>
            <person name="Boutin A."/>
            <person name="Shao Y."/>
            <person name="Miller L."/>
            <person name="Grotbeck E.J."/>
            <person name="Davis N.W."/>
            <person name="Lim A."/>
            <person name="Dimalanta E.T."/>
            <person name="Potamousis K."/>
            <person name="Apodaca J."/>
            <person name="Anantharaman T.S."/>
            <person name="Lin J."/>
            <person name="Yen G."/>
            <person name="Schwartz D.C."/>
            <person name="Welch R.A."/>
            <person name="Blattner F.R."/>
        </authorList>
    </citation>
    <scope>NUCLEOTIDE SEQUENCE [LARGE SCALE GENOMIC DNA]</scope>
    <source>
        <strain>O157:H7 / EDL933 / ATCC 700927 / EHEC</strain>
    </source>
</reference>
<reference key="2">
    <citation type="journal article" date="2001" name="DNA Res.">
        <title>Complete genome sequence of enterohemorrhagic Escherichia coli O157:H7 and genomic comparison with a laboratory strain K-12.</title>
        <authorList>
            <person name="Hayashi T."/>
            <person name="Makino K."/>
            <person name="Ohnishi M."/>
            <person name="Kurokawa K."/>
            <person name="Ishii K."/>
            <person name="Yokoyama K."/>
            <person name="Han C.-G."/>
            <person name="Ohtsubo E."/>
            <person name="Nakayama K."/>
            <person name="Murata T."/>
            <person name="Tanaka M."/>
            <person name="Tobe T."/>
            <person name="Iida T."/>
            <person name="Takami H."/>
            <person name="Honda T."/>
            <person name="Sasakawa C."/>
            <person name="Ogasawara N."/>
            <person name="Yasunaga T."/>
            <person name="Kuhara S."/>
            <person name="Shiba T."/>
            <person name="Hattori M."/>
            <person name="Shinagawa H."/>
        </authorList>
    </citation>
    <scope>NUCLEOTIDE SEQUENCE [LARGE SCALE GENOMIC DNA]</scope>
    <source>
        <strain>O157:H7 / Sakai / RIMD 0509952 / EHEC</strain>
    </source>
</reference>
<accession>P58626</accession>
<organism>
    <name type="scientific">Escherichia coli O157:H7</name>
    <dbReference type="NCBI Taxonomy" id="83334"/>
    <lineage>
        <taxon>Bacteria</taxon>
        <taxon>Pseudomonadati</taxon>
        <taxon>Pseudomonadota</taxon>
        <taxon>Gammaproteobacteria</taxon>
        <taxon>Enterobacterales</taxon>
        <taxon>Enterobacteriaceae</taxon>
        <taxon>Escherichia</taxon>
    </lineage>
</organism>
<sequence length="194" mass="21672">MPKLILASTSPWRRALLEKLQISFECAAPEVDETPHSDESPRQLVLRLAQEKAQSLASRYPDHLIIGSDQVCVLDGEITGKPLTEENARLQLRKASGNIVTFYTGLALFNSANGHLQTEVEPFDVHFRHLSEAEIDNYVRKEHPLHCAGSFKSEGFGITLFERLEGRDPNTLVGLPLIALCQMLRREGKNPLMG</sequence>
<protein>
    <recommendedName>
        <fullName evidence="1">7-methyl-GTP pyrophosphatase</fullName>
        <shortName evidence="1">m(7)GTP pyrophosphatase</shortName>
        <ecNumber evidence="1">3.6.1.-</ecNumber>
    </recommendedName>
</protein>
<dbReference type="EC" id="3.6.1.-" evidence="1"/>
<dbReference type="EMBL" id="AE005174">
    <property type="protein sequence ID" value="AAG55833.1"/>
    <property type="status" value="ALT_INIT"/>
    <property type="molecule type" value="Genomic_DNA"/>
</dbReference>
<dbReference type="EMBL" id="BA000007">
    <property type="protein sequence ID" value="BAB34888.1"/>
    <property type="status" value="ALT_INIT"/>
    <property type="molecule type" value="Genomic_DNA"/>
</dbReference>
<dbReference type="PIR" id="A99812">
    <property type="entry name" value="A99812"/>
</dbReference>
<dbReference type="PIR" id="E85671">
    <property type="entry name" value="E85671"/>
</dbReference>
<dbReference type="RefSeq" id="NP_309492.2">
    <property type="nucleotide sequence ID" value="NC_002695.1"/>
</dbReference>
<dbReference type="RefSeq" id="WP_001125199.1">
    <property type="nucleotide sequence ID" value="NZ_VOAI01000018.1"/>
</dbReference>
<dbReference type="SMR" id="P58626"/>
<dbReference type="STRING" id="155864.Z1726"/>
<dbReference type="GeneID" id="75171211"/>
<dbReference type="GeneID" id="912761"/>
<dbReference type="KEGG" id="ece:Z1726"/>
<dbReference type="KEGG" id="ecs:ECs_1465"/>
<dbReference type="PATRIC" id="fig|386585.9.peg.1565"/>
<dbReference type="eggNOG" id="COG0424">
    <property type="taxonomic scope" value="Bacteria"/>
</dbReference>
<dbReference type="HOGENOM" id="CLU_040416_1_0_6"/>
<dbReference type="Proteomes" id="UP000000558">
    <property type="component" value="Chromosome"/>
</dbReference>
<dbReference type="Proteomes" id="UP000002519">
    <property type="component" value="Chromosome"/>
</dbReference>
<dbReference type="GO" id="GO:0005737">
    <property type="term" value="C:cytoplasm"/>
    <property type="evidence" value="ECO:0007669"/>
    <property type="project" value="UniProtKB-SubCell"/>
</dbReference>
<dbReference type="GO" id="GO:0047429">
    <property type="term" value="F:nucleoside triphosphate diphosphatase activity"/>
    <property type="evidence" value="ECO:0007669"/>
    <property type="project" value="InterPro"/>
</dbReference>
<dbReference type="GO" id="GO:0009117">
    <property type="term" value="P:nucleotide metabolic process"/>
    <property type="evidence" value="ECO:0007669"/>
    <property type="project" value="UniProtKB-KW"/>
</dbReference>
<dbReference type="CDD" id="cd00555">
    <property type="entry name" value="Maf"/>
    <property type="match status" value="1"/>
</dbReference>
<dbReference type="FunFam" id="3.90.950.10:FF:000005">
    <property type="entry name" value="7-methyl-GTP pyrophosphatase"/>
    <property type="match status" value="1"/>
</dbReference>
<dbReference type="Gene3D" id="3.90.950.10">
    <property type="match status" value="1"/>
</dbReference>
<dbReference type="HAMAP" id="MF_00528">
    <property type="entry name" value="Maf"/>
    <property type="match status" value="1"/>
</dbReference>
<dbReference type="InterPro" id="IPR029001">
    <property type="entry name" value="ITPase-like_fam"/>
</dbReference>
<dbReference type="InterPro" id="IPR003697">
    <property type="entry name" value="Maf-like"/>
</dbReference>
<dbReference type="NCBIfam" id="TIGR00172">
    <property type="entry name" value="maf"/>
    <property type="match status" value="1"/>
</dbReference>
<dbReference type="PANTHER" id="PTHR43213:SF10">
    <property type="entry name" value="7-METHYL-GTP PYROPHOSPHATASE"/>
    <property type="match status" value="1"/>
</dbReference>
<dbReference type="PANTHER" id="PTHR43213">
    <property type="entry name" value="BIFUNCTIONAL DTTP/UTP PYROPHOSPHATASE/METHYLTRANSFERASE PROTEIN-RELATED"/>
    <property type="match status" value="1"/>
</dbReference>
<dbReference type="Pfam" id="PF02545">
    <property type="entry name" value="Maf"/>
    <property type="match status" value="1"/>
</dbReference>
<dbReference type="PIRSF" id="PIRSF006305">
    <property type="entry name" value="Maf"/>
    <property type="match status" value="1"/>
</dbReference>
<dbReference type="SUPFAM" id="SSF52972">
    <property type="entry name" value="ITPase-like"/>
    <property type="match status" value="1"/>
</dbReference>
<gene>
    <name type="primary">yceF</name>
    <name type="ordered locus">Z1726</name>
    <name type="ordered locus">ECs1465</name>
</gene>
<feature type="chain" id="PRO_0000122977" description="7-methyl-GTP pyrophosphatase">
    <location>
        <begin position="1"/>
        <end position="194"/>
    </location>
</feature>
<feature type="active site" description="Proton acceptor" evidence="1">
    <location>
        <position position="69"/>
    </location>
</feature>
<feature type="site" description="Important for substrate specificity" evidence="1">
    <location>
        <position position="12"/>
    </location>
</feature>
<feature type="site" description="Important for substrate specificity" evidence="1">
    <location>
        <position position="70"/>
    </location>
</feature>
<feature type="site" description="Important for substrate specificity" evidence="1">
    <location>
        <position position="154"/>
    </location>
</feature>
<feature type="sequence conflict" description="In Ref. 2; BAB34888." evidence="2" ref="2">
    <original>E</original>
    <variation>G</variation>
    <location>
        <position position="142"/>
    </location>
</feature>
<name>NTPPB_ECO57</name>
<keyword id="KW-0963">Cytoplasm</keyword>
<keyword id="KW-0378">Hydrolase</keyword>
<keyword id="KW-0546">Nucleotide metabolism</keyword>
<keyword id="KW-1185">Reference proteome</keyword>
<proteinExistence type="inferred from homology"/>
<evidence type="ECO:0000255" key="1">
    <source>
        <dbReference type="HAMAP-Rule" id="MF_00528"/>
    </source>
</evidence>
<evidence type="ECO:0000305" key="2"/>